<keyword id="KW-0378">Hydrolase</keyword>
<evidence type="ECO:0000255" key="1"/>
<evidence type="ECO:0000255" key="2">
    <source>
        <dbReference type="HAMAP-Rule" id="MF_00684"/>
    </source>
</evidence>
<comment type="function">
    <text evidence="2">Catalyzes the hydrolysis of N(4)-acetylcytidine (ac4C).</text>
</comment>
<comment type="catalytic activity">
    <reaction evidence="2">
        <text>N(4)-acetylcytidine + H2O = cytidine + acetate + H(+)</text>
        <dbReference type="Rhea" id="RHEA:62932"/>
        <dbReference type="ChEBI" id="CHEBI:15377"/>
        <dbReference type="ChEBI" id="CHEBI:15378"/>
        <dbReference type="ChEBI" id="CHEBI:17562"/>
        <dbReference type="ChEBI" id="CHEBI:30089"/>
        <dbReference type="ChEBI" id="CHEBI:70989"/>
        <dbReference type="EC" id="3.5.1.135"/>
    </reaction>
</comment>
<comment type="catalytic activity">
    <reaction evidence="2">
        <text>N(4)-acetyl-2'-deoxycytidine + H2O = 2'-deoxycytidine + acetate + H(+)</text>
        <dbReference type="Rhea" id="RHEA:62936"/>
        <dbReference type="ChEBI" id="CHEBI:15377"/>
        <dbReference type="ChEBI" id="CHEBI:15378"/>
        <dbReference type="ChEBI" id="CHEBI:15698"/>
        <dbReference type="ChEBI" id="CHEBI:30089"/>
        <dbReference type="ChEBI" id="CHEBI:146133"/>
        <dbReference type="EC" id="3.5.1.135"/>
    </reaction>
</comment>
<comment type="catalytic activity">
    <reaction evidence="2">
        <text>N(4)-acetylcytosine + H2O = cytosine + acetate + H(+)</text>
        <dbReference type="Rhea" id="RHEA:62940"/>
        <dbReference type="ChEBI" id="CHEBI:15377"/>
        <dbReference type="ChEBI" id="CHEBI:15378"/>
        <dbReference type="ChEBI" id="CHEBI:16040"/>
        <dbReference type="ChEBI" id="CHEBI:30089"/>
        <dbReference type="ChEBI" id="CHEBI:146134"/>
        <dbReference type="EC" id="3.5.1.135"/>
    </reaction>
</comment>
<comment type="similarity">
    <text evidence="2">Belongs to the N(4)-acetylcytidine amidohydrolase family.</text>
</comment>
<organism>
    <name type="scientific">Escherichia coli O8 (strain IAI1)</name>
    <dbReference type="NCBI Taxonomy" id="585034"/>
    <lineage>
        <taxon>Bacteria</taxon>
        <taxon>Pseudomonadati</taxon>
        <taxon>Pseudomonadota</taxon>
        <taxon>Gammaproteobacteria</taxon>
        <taxon>Enterobacterales</taxon>
        <taxon>Enterobacteriaceae</taxon>
        <taxon>Escherichia</taxon>
    </lineage>
</organism>
<accession>B7LYG4</accession>
<sequence>MQPNDITFFQRFQDDILAGRKTITIRDESESHFKTGDVLRVGRFEDDGYFCTIEVTATSTVTLDTLTEKHAEQENMTLTELIKVIADIYPGQTQFYVIEFKCL</sequence>
<protein>
    <recommendedName>
        <fullName evidence="2">N(4)-acetylcytidine amidohydrolase</fullName>
        <shortName evidence="2">ac4C amidohydrolase</shortName>
        <ecNumber evidence="2">3.5.1.135</ecNumber>
    </recommendedName>
</protein>
<gene>
    <name type="primary">yqfB</name>
    <name type="ordered locus">ECIAI1_3019</name>
</gene>
<reference key="1">
    <citation type="journal article" date="2009" name="PLoS Genet.">
        <title>Organised genome dynamics in the Escherichia coli species results in highly diverse adaptive paths.</title>
        <authorList>
            <person name="Touchon M."/>
            <person name="Hoede C."/>
            <person name="Tenaillon O."/>
            <person name="Barbe V."/>
            <person name="Baeriswyl S."/>
            <person name="Bidet P."/>
            <person name="Bingen E."/>
            <person name="Bonacorsi S."/>
            <person name="Bouchier C."/>
            <person name="Bouvet O."/>
            <person name="Calteau A."/>
            <person name="Chiapello H."/>
            <person name="Clermont O."/>
            <person name="Cruveiller S."/>
            <person name="Danchin A."/>
            <person name="Diard M."/>
            <person name="Dossat C."/>
            <person name="Karoui M.E."/>
            <person name="Frapy E."/>
            <person name="Garry L."/>
            <person name="Ghigo J.M."/>
            <person name="Gilles A.M."/>
            <person name="Johnson J."/>
            <person name="Le Bouguenec C."/>
            <person name="Lescat M."/>
            <person name="Mangenot S."/>
            <person name="Martinez-Jehanne V."/>
            <person name="Matic I."/>
            <person name="Nassif X."/>
            <person name="Oztas S."/>
            <person name="Petit M.A."/>
            <person name="Pichon C."/>
            <person name="Rouy Z."/>
            <person name="Ruf C.S."/>
            <person name="Schneider D."/>
            <person name="Tourret J."/>
            <person name="Vacherie B."/>
            <person name="Vallenet D."/>
            <person name="Medigue C."/>
            <person name="Rocha E.P.C."/>
            <person name="Denamur E."/>
        </authorList>
    </citation>
    <scope>NUCLEOTIDE SEQUENCE [LARGE SCALE GENOMIC DNA]</scope>
    <source>
        <strain>IAI1</strain>
    </source>
</reference>
<name>AC4CH_ECO8A</name>
<proteinExistence type="inferred from homology"/>
<feature type="chain" id="PRO_1000131785" description="N(4)-acetylcytidine amidohydrolase">
    <location>
        <begin position="1"/>
        <end position="103"/>
    </location>
</feature>
<feature type="domain" description="ASCH" evidence="1">
    <location>
        <begin position="6"/>
        <end position="101"/>
    </location>
</feature>
<feature type="active site" description="Proton acceptor" evidence="2">
    <location>
        <position position="21"/>
    </location>
</feature>
<feature type="active site" description="Nucleophile" evidence="2">
    <location>
        <position position="24"/>
    </location>
</feature>
<feature type="active site" description="Proton donor" evidence="2">
    <location>
        <position position="74"/>
    </location>
</feature>
<dbReference type="EC" id="3.5.1.135" evidence="2"/>
<dbReference type="EMBL" id="CU928160">
    <property type="protein sequence ID" value="CAQ99834.1"/>
    <property type="molecule type" value="Genomic_DNA"/>
</dbReference>
<dbReference type="RefSeq" id="WP_001182954.1">
    <property type="nucleotide sequence ID" value="NC_011741.1"/>
</dbReference>
<dbReference type="SMR" id="B7LYG4"/>
<dbReference type="GeneID" id="93779102"/>
<dbReference type="KEGG" id="ecr:ECIAI1_3019"/>
<dbReference type="HOGENOM" id="CLU_152586_0_0_6"/>
<dbReference type="GO" id="GO:0005829">
    <property type="term" value="C:cytosol"/>
    <property type="evidence" value="ECO:0007669"/>
    <property type="project" value="TreeGrafter"/>
</dbReference>
<dbReference type="GO" id="GO:0016813">
    <property type="term" value="F:hydrolase activity, acting on carbon-nitrogen (but not peptide) bonds, in linear amidines"/>
    <property type="evidence" value="ECO:0007669"/>
    <property type="project" value="UniProtKB-UniRule"/>
</dbReference>
<dbReference type="GO" id="GO:0106251">
    <property type="term" value="F:N4-acetylcytidine amidohydrolase activity"/>
    <property type="evidence" value="ECO:0007669"/>
    <property type="project" value="RHEA"/>
</dbReference>
<dbReference type="CDD" id="cd06552">
    <property type="entry name" value="ASCH_yqfb_like"/>
    <property type="match status" value="1"/>
</dbReference>
<dbReference type="FunFam" id="2.30.130.30:FF:000001">
    <property type="entry name" value="UPF0267 protein YqfB"/>
    <property type="match status" value="1"/>
</dbReference>
<dbReference type="Gene3D" id="2.30.130.30">
    <property type="entry name" value="Hypothetical protein"/>
    <property type="match status" value="1"/>
</dbReference>
<dbReference type="HAMAP" id="MF_00684">
    <property type="entry name" value="ac4C_amidohydr"/>
    <property type="match status" value="1"/>
</dbReference>
<dbReference type="InterPro" id="IPR008314">
    <property type="entry name" value="AC4CH"/>
</dbReference>
<dbReference type="InterPro" id="IPR007374">
    <property type="entry name" value="ASCH_domain"/>
</dbReference>
<dbReference type="InterPro" id="IPR015947">
    <property type="entry name" value="PUA-like_sf"/>
</dbReference>
<dbReference type="NCBIfam" id="NF003443">
    <property type="entry name" value="PRK04980.1"/>
    <property type="match status" value="1"/>
</dbReference>
<dbReference type="PANTHER" id="PTHR38088">
    <property type="entry name" value="UCP029143 FAMILY PROTEIN"/>
    <property type="match status" value="1"/>
</dbReference>
<dbReference type="PANTHER" id="PTHR38088:SF2">
    <property type="entry name" value="UCP029143 FAMILY PROTEIN"/>
    <property type="match status" value="1"/>
</dbReference>
<dbReference type="Pfam" id="PF04266">
    <property type="entry name" value="ASCH"/>
    <property type="match status" value="1"/>
</dbReference>
<dbReference type="PIRSF" id="PIRSF029143">
    <property type="entry name" value="UCP029143"/>
    <property type="match status" value="1"/>
</dbReference>
<dbReference type="SMART" id="SM01022">
    <property type="entry name" value="ASCH"/>
    <property type="match status" value="1"/>
</dbReference>
<dbReference type="SUPFAM" id="SSF88697">
    <property type="entry name" value="PUA domain-like"/>
    <property type="match status" value="1"/>
</dbReference>